<gene>
    <name evidence="1" type="primary">rpsF</name>
    <name evidence="1" type="synonym">rps6</name>
    <name type="ordered locus">PMM1706</name>
</gene>
<protein>
    <recommendedName>
        <fullName evidence="1">Small ribosomal subunit protein bS6</fullName>
    </recommendedName>
    <alternativeName>
        <fullName evidence="3">30S ribosomal protein S6</fullName>
    </alternativeName>
</protein>
<sequence length="154" mass="17707">MTDQIYYETMYILRPDIAEDEVTNHIDKYNKLLEESGGKILDSQMRGKRRLAYQIAKHREGIYVQLSHQGDGQHIFKIEKAMRLSEDVIRYLTVKQEGPLPTPRSSNKGYNQSEKKDIESIDSTNKSEFKEEANDKKTATSESTSSQGKESQKS</sequence>
<comment type="function">
    <text evidence="1">Binds together with bS18 to 16S ribosomal RNA.</text>
</comment>
<comment type="similarity">
    <text evidence="1">Belongs to the bacterial ribosomal protein bS6 family.</text>
</comment>
<dbReference type="EMBL" id="BX548174">
    <property type="protein sequence ID" value="CAE20165.1"/>
    <property type="molecule type" value="Genomic_DNA"/>
</dbReference>
<dbReference type="RefSeq" id="WP_011133333.1">
    <property type="nucleotide sequence ID" value="NC_005072.1"/>
</dbReference>
<dbReference type="SMR" id="Q7UZG1"/>
<dbReference type="STRING" id="59919.PMM1706"/>
<dbReference type="KEGG" id="pmm:PMM1706"/>
<dbReference type="eggNOG" id="COG0360">
    <property type="taxonomic scope" value="Bacteria"/>
</dbReference>
<dbReference type="HOGENOM" id="CLU_113441_4_2_3"/>
<dbReference type="OrthoDB" id="9812702at2"/>
<dbReference type="Proteomes" id="UP000001026">
    <property type="component" value="Chromosome"/>
</dbReference>
<dbReference type="GO" id="GO:0005737">
    <property type="term" value="C:cytoplasm"/>
    <property type="evidence" value="ECO:0007669"/>
    <property type="project" value="UniProtKB-ARBA"/>
</dbReference>
<dbReference type="GO" id="GO:1990904">
    <property type="term" value="C:ribonucleoprotein complex"/>
    <property type="evidence" value="ECO:0007669"/>
    <property type="project" value="UniProtKB-KW"/>
</dbReference>
<dbReference type="GO" id="GO:0005840">
    <property type="term" value="C:ribosome"/>
    <property type="evidence" value="ECO:0007669"/>
    <property type="project" value="UniProtKB-KW"/>
</dbReference>
<dbReference type="GO" id="GO:0070181">
    <property type="term" value="F:small ribosomal subunit rRNA binding"/>
    <property type="evidence" value="ECO:0007669"/>
    <property type="project" value="TreeGrafter"/>
</dbReference>
<dbReference type="GO" id="GO:0003735">
    <property type="term" value="F:structural constituent of ribosome"/>
    <property type="evidence" value="ECO:0007669"/>
    <property type="project" value="InterPro"/>
</dbReference>
<dbReference type="GO" id="GO:0006412">
    <property type="term" value="P:translation"/>
    <property type="evidence" value="ECO:0007669"/>
    <property type="project" value="UniProtKB-UniRule"/>
</dbReference>
<dbReference type="CDD" id="cd15487">
    <property type="entry name" value="bS6_chloro_cyano"/>
    <property type="match status" value="1"/>
</dbReference>
<dbReference type="Gene3D" id="3.30.70.60">
    <property type="match status" value="1"/>
</dbReference>
<dbReference type="HAMAP" id="MF_00360">
    <property type="entry name" value="Ribosomal_bS6"/>
    <property type="match status" value="1"/>
</dbReference>
<dbReference type="InterPro" id="IPR000529">
    <property type="entry name" value="Ribosomal_bS6"/>
</dbReference>
<dbReference type="InterPro" id="IPR020815">
    <property type="entry name" value="Ribosomal_bS6_CS"/>
</dbReference>
<dbReference type="InterPro" id="IPR035980">
    <property type="entry name" value="Ribosomal_bS6_sf"/>
</dbReference>
<dbReference type="InterPro" id="IPR020814">
    <property type="entry name" value="Ribosomal_S6_plastid/chlpt"/>
</dbReference>
<dbReference type="InterPro" id="IPR014717">
    <property type="entry name" value="Transl_elong_EF1B/ribsomal_bS6"/>
</dbReference>
<dbReference type="NCBIfam" id="TIGR00166">
    <property type="entry name" value="S6"/>
    <property type="match status" value="1"/>
</dbReference>
<dbReference type="PANTHER" id="PTHR21011">
    <property type="entry name" value="MITOCHONDRIAL 28S RIBOSOMAL PROTEIN S6"/>
    <property type="match status" value="1"/>
</dbReference>
<dbReference type="PANTHER" id="PTHR21011:SF1">
    <property type="entry name" value="SMALL RIBOSOMAL SUBUNIT PROTEIN BS6M"/>
    <property type="match status" value="1"/>
</dbReference>
<dbReference type="Pfam" id="PF01250">
    <property type="entry name" value="Ribosomal_S6"/>
    <property type="match status" value="1"/>
</dbReference>
<dbReference type="SUPFAM" id="SSF54995">
    <property type="entry name" value="Ribosomal protein S6"/>
    <property type="match status" value="1"/>
</dbReference>
<dbReference type="PROSITE" id="PS01048">
    <property type="entry name" value="RIBOSOMAL_S6"/>
    <property type="match status" value="1"/>
</dbReference>
<proteinExistence type="inferred from homology"/>
<feature type="chain" id="PRO_0000176818" description="Small ribosomal subunit protein bS6">
    <location>
        <begin position="1"/>
        <end position="154"/>
    </location>
</feature>
<feature type="region of interest" description="Disordered" evidence="2">
    <location>
        <begin position="94"/>
        <end position="154"/>
    </location>
</feature>
<feature type="compositionally biased region" description="Polar residues" evidence="2">
    <location>
        <begin position="103"/>
        <end position="112"/>
    </location>
</feature>
<feature type="compositionally biased region" description="Basic and acidic residues" evidence="2">
    <location>
        <begin position="113"/>
        <end position="139"/>
    </location>
</feature>
<feature type="compositionally biased region" description="Polar residues" evidence="2">
    <location>
        <begin position="140"/>
        <end position="154"/>
    </location>
</feature>
<keyword id="KW-0687">Ribonucleoprotein</keyword>
<keyword id="KW-0689">Ribosomal protein</keyword>
<keyword id="KW-0694">RNA-binding</keyword>
<keyword id="KW-0699">rRNA-binding</keyword>
<name>RS6_PROMP</name>
<evidence type="ECO:0000255" key="1">
    <source>
        <dbReference type="HAMAP-Rule" id="MF_00360"/>
    </source>
</evidence>
<evidence type="ECO:0000256" key="2">
    <source>
        <dbReference type="SAM" id="MobiDB-lite"/>
    </source>
</evidence>
<evidence type="ECO:0000305" key="3"/>
<organism>
    <name type="scientific">Prochlorococcus marinus subsp. pastoris (strain CCMP1986 / NIES-2087 / MED4)</name>
    <dbReference type="NCBI Taxonomy" id="59919"/>
    <lineage>
        <taxon>Bacteria</taxon>
        <taxon>Bacillati</taxon>
        <taxon>Cyanobacteriota</taxon>
        <taxon>Cyanophyceae</taxon>
        <taxon>Synechococcales</taxon>
        <taxon>Prochlorococcaceae</taxon>
        <taxon>Prochlorococcus</taxon>
    </lineage>
</organism>
<accession>Q7UZG1</accession>
<reference key="1">
    <citation type="journal article" date="2003" name="Nature">
        <title>Genome divergence in two Prochlorococcus ecotypes reflects oceanic niche differentiation.</title>
        <authorList>
            <person name="Rocap G."/>
            <person name="Larimer F.W."/>
            <person name="Lamerdin J.E."/>
            <person name="Malfatti S."/>
            <person name="Chain P."/>
            <person name="Ahlgren N.A."/>
            <person name="Arellano A."/>
            <person name="Coleman M."/>
            <person name="Hauser L."/>
            <person name="Hess W.R."/>
            <person name="Johnson Z.I."/>
            <person name="Land M.L."/>
            <person name="Lindell D."/>
            <person name="Post A.F."/>
            <person name="Regala W."/>
            <person name="Shah M."/>
            <person name="Shaw S.L."/>
            <person name="Steglich C."/>
            <person name="Sullivan M.B."/>
            <person name="Ting C.S."/>
            <person name="Tolonen A."/>
            <person name="Webb E.A."/>
            <person name="Zinser E.R."/>
            <person name="Chisholm S.W."/>
        </authorList>
    </citation>
    <scope>NUCLEOTIDE SEQUENCE [LARGE SCALE GENOMIC DNA]</scope>
    <source>
        <strain>CCMP1986 / NIES-2087 / MED4</strain>
    </source>
</reference>